<name>DPH4_ASPFU</name>
<protein>
    <recommendedName>
        <fullName>Diphthamide biosynthesis protein 4</fullName>
    </recommendedName>
</protein>
<evidence type="ECO:0000250" key="1"/>
<evidence type="ECO:0000255" key="2">
    <source>
        <dbReference type="PROSITE-ProRule" id="PRU00286"/>
    </source>
</evidence>
<evidence type="ECO:0000255" key="3">
    <source>
        <dbReference type="PROSITE-ProRule" id="PRU00456"/>
    </source>
</evidence>
<evidence type="ECO:0000256" key="4">
    <source>
        <dbReference type="SAM" id="MobiDB-lite"/>
    </source>
</evidence>
<evidence type="ECO:0000305" key="5"/>
<sequence>MIKSQTPRHDYYHILNLPFTTPPAALSKQQLKIAYHKALLKHHPDKAISVAATPARTHTHDTKTAYRSSPDRNADTSPTFTIDEITAAYKTLSDPALRAEYDRVLRLERVTAGKGDKGAEAAFHTGLEVVDLEDLVCEEMGDGEGLLCWYRGCRCGDERGFMVTEKDLEKEAEHGEVVIGCRGCSLWMKILFAMEEGDG</sequence>
<proteinExistence type="inferred from homology"/>
<gene>
    <name type="primary">dph4</name>
    <name type="ORF">AFUA_4G09100</name>
</gene>
<feature type="chain" id="PRO_0000071144" description="Diphthamide biosynthesis protein 4">
    <location>
        <begin position="1"/>
        <end position="199"/>
    </location>
</feature>
<feature type="domain" description="J" evidence="2">
    <location>
        <begin position="10"/>
        <end position="105"/>
    </location>
</feature>
<feature type="domain" description="DPH-type MB" evidence="3">
    <location>
        <begin position="126"/>
        <end position="193"/>
    </location>
</feature>
<feature type="region of interest" description="Disordered" evidence="4">
    <location>
        <begin position="55"/>
        <end position="77"/>
    </location>
</feature>
<feature type="compositionally biased region" description="Basic and acidic residues" evidence="4">
    <location>
        <begin position="58"/>
        <end position="74"/>
    </location>
</feature>
<feature type="binding site" evidence="3">
    <location>
        <position position="153"/>
    </location>
    <ligand>
        <name>Zn(2+)</name>
        <dbReference type="ChEBI" id="CHEBI:29105"/>
    </ligand>
</feature>
<feature type="binding site" evidence="3">
    <location>
        <position position="155"/>
    </location>
    <ligand>
        <name>Zn(2+)</name>
        <dbReference type="ChEBI" id="CHEBI:29105"/>
    </ligand>
</feature>
<feature type="binding site" evidence="3">
    <location>
        <position position="181"/>
    </location>
    <ligand>
        <name>Zn(2+)</name>
        <dbReference type="ChEBI" id="CHEBI:29105"/>
    </ligand>
</feature>
<feature type="binding site" evidence="3">
    <location>
        <position position="184"/>
    </location>
    <ligand>
        <name>Zn(2+)</name>
        <dbReference type="ChEBI" id="CHEBI:29105"/>
    </ligand>
</feature>
<comment type="function">
    <text evidence="1">Required for the first step of diphthamide biosynthesis, the transfer of 3-amino-3-carboxypropyl from S-adenosyl-L-methionine to a histidine residue. Diphthamide is a post-translational modification of histidine which occurs in elongation factor 2 (By similarity).</text>
</comment>
<comment type="pathway">
    <text>Protein modification; peptidyl-diphthamide biosynthesis.</text>
</comment>
<comment type="subcellular location">
    <subcellularLocation>
        <location evidence="1">Cytoplasm</location>
    </subcellularLocation>
    <subcellularLocation>
        <location evidence="1">Nucleus</location>
    </subcellularLocation>
</comment>
<comment type="domain">
    <text evidence="3">The DPH-type metal-binding (MB) domain can bind either zinc or iron ions.</text>
</comment>
<comment type="similarity">
    <text evidence="5">Belongs to the DPH4 family.</text>
</comment>
<organism>
    <name type="scientific">Aspergillus fumigatus (strain ATCC MYA-4609 / CBS 101355 / FGSC A1100 / Af293)</name>
    <name type="common">Neosartorya fumigata</name>
    <dbReference type="NCBI Taxonomy" id="330879"/>
    <lineage>
        <taxon>Eukaryota</taxon>
        <taxon>Fungi</taxon>
        <taxon>Dikarya</taxon>
        <taxon>Ascomycota</taxon>
        <taxon>Pezizomycotina</taxon>
        <taxon>Eurotiomycetes</taxon>
        <taxon>Eurotiomycetidae</taxon>
        <taxon>Eurotiales</taxon>
        <taxon>Aspergillaceae</taxon>
        <taxon>Aspergillus</taxon>
        <taxon>Aspergillus subgen. Fumigati</taxon>
    </lineage>
</organism>
<keyword id="KW-0963">Cytoplasm</keyword>
<keyword id="KW-0408">Iron</keyword>
<keyword id="KW-0479">Metal-binding</keyword>
<keyword id="KW-0539">Nucleus</keyword>
<keyword id="KW-1185">Reference proteome</keyword>
<keyword id="KW-0862">Zinc</keyword>
<reference key="1">
    <citation type="journal article" date="2005" name="Nature">
        <title>Genomic sequence of the pathogenic and allergenic filamentous fungus Aspergillus fumigatus.</title>
        <authorList>
            <person name="Nierman W.C."/>
            <person name="Pain A."/>
            <person name="Anderson M.J."/>
            <person name="Wortman J.R."/>
            <person name="Kim H.S."/>
            <person name="Arroyo J."/>
            <person name="Berriman M."/>
            <person name="Abe K."/>
            <person name="Archer D.B."/>
            <person name="Bermejo C."/>
            <person name="Bennett J.W."/>
            <person name="Bowyer P."/>
            <person name="Chen D."/>
            <person name="Collins M."/>
            <person name="Coulsen R."/>
            <person name="Davies R."/>
            <person name="Dyer P.S."/>
            <person name="Farman M.L."/>
            <person name="Fedorova N."/>
            <person name="Fedorova N.D."/>
            <person name="Feldblyum T.V."/>
            <person name="Fischer R."/>
            <person name="Fosker N."/>
            <person name="Fraser A."/>
            <person name="Garcia J.L."/>
            <person name="Garcia M.J."/>
            <person name="Goble A."/>
            <person name="Goldman G.H."/>
            <person name="Gomi K."/>
            <person name="Griffith-Jones S."/>
            <person name="Gwilliam R."/>
            <person name="Haas B.J."/>
            <person name="Haas H."/>
            <person name="Harris D.E."/>
            <person name="Horiuchi H."/>
            <person name="Huang J."/>
            <person name="Humphray S."/>
            <person name="Jimenez J."/>
            <person name="Keller N."/>
            <person name="Khouri H."/>
            <person name="Kitamoto K."/>
            <person name="Kobayashi T."/>
            <person name="Konzack S."/>
            <person name="Kulkarni R."/>
            <person name="Kumagai T."/>
            <person name="Lafton A."/>
            <person name="Latge J.-P."/>
            <person name="Li W."/>
            <person name="Lord A."/>
            <person name="Lu C."/>
            <person name="Majoros W.H."/>
            <person name="May G.S."/>
            <person name="Miller B.L."/>
            <person name="Mohamoud Y."/>
            <person name="Molina M."/>
            <person name="Monod M."/>
            <person name="Mouyna I."/>
            <person name="Mulligan S."/>
            <person name="Murphy L.D."/>
            <person name="O'Neil S."/>
            <person name="Paulsen I."/>
            <person name="Penalva M.A."/>
            <person name="Pertea M."/>
            <person name="Price C."/>
            <person name="Pritchard B.L."/>
            <person name="Quail M.A."/>
            <person name="Rabbinowitsch E."/>
            <person name="Rawlins N."/>
            <person name="Rajandream M.A."/>
            <person name="Reichard U."/>
            <person name="Renauld H."/>
            <person name="Robson G.D."/>
            <person name="Rodriguez de Cordoba S."/>
            <person name="Rodriguez-Pena J.M."/>
            <person name="Ronning C.M."/>
            <person name="Rutter S."/>
            <person name="Salzberg S.L."/>
            <person name="Sanchez M."/>
            <person name="Sanchez-Ferrero J.C."/>
            <person name="Saunders D."/>
            <person name="Seeger K."/>
            <person name="Squares R."/>
            <person name="Squares S."/>
            <person name="Takeuchi M."/>
            <person name="Tekaia F."/>
            <person name="Turner G."/>
            <person name="Vazquez de Aldana C.R."/>
            <person name="Weidman J."/>
            <person name="White O."/>
            <person name="Woodward J.R."/>
            <person name="Yu J.-H."/>
            <person name="Fraser C.M."/>
            <person name="Galagan J.E."/>
            <person name="Asai K."/>
            <person name="Machida M."/>
            <person name="Hall N."/>
            <person name="Barrell B.G."/>
            <person name="Denning D.W."/>
        </authorList>
    </citation>
    <scope>NUCLEOTIDE SEQUENCE [LARGE SCALE GENOMIC DNA]</scope>
    <source>
        <strain>ATCC MYA-4609 / CBS 101355 / FGSC A1100 / Af293</strain>
    </source>
</reference>
<dbReference type="EMBL" id="AAHF01000005">
    <property type="protein sequence ID" value="EAL89877.1"/>
    <property type="molecule type" value="Genomic_DNA"/>
</dbReference>
<dbReference type="RefSeq" id="XP_751915.1">
    <property type="nucleotide sequence ID" value="XM_746822.1"/>
</dbReference>
<dbReference type="SMR" id="Q4WPF7"/>
<dbReference type="FunCoup" id="Q4WPF7">
    <property type="interactions" value="358"/>
</dbReference>
<dbReference type="STRING" id="330879.Q4WPF7"/>
<dbReference type="EnsemblFungi" id="EAL89877">
    <property type="protein sequence ID" value="EAL89877"/>
    <property type="gene ID" value="AFUA_4G09100"/>
</dbReference>
<dbReference type="GeneID" id="3509521"/>
<dbReference type="KEGG" id="afm:AFUA_4G09100"/>
<dbReference type="VEuPathDB" id="FungiDB:Afu4g09100"/>
<dbReference type="eggNOG" id="ENOG502SD2Q">
    <property type="taxonomic scope" value="Eukaryota"/>
</dbReference>
<dbReference type="HOGENOM" id="CLU_017633_7_0_1"/>
<dbReference type="InParanoid" id="Q4WPF7"/>
<dbReference type="OMA" id="IIGCRGC"/>
<dbReference type="OrthoDB" id="445556at2759"/>
<dbReference type="UniPathway" id="UPA00559"/>
<dbReference type="Proteomes" id="UP000002530">
    <property type="component" value="Chromosome 4"/>
</dbReference>
<dbReference type="GO" id="GO:0005737">
    <property type="term" value="C:cytoplasm"/>
    <property type="evidence" value="ECO:0007669"/>
    <property type="project" value="UniProtKB-SubCell"/>
</dbReference>
<dbReference type="GO" id="GO:0005634">
    <property type="term" value="C:nucleus"/>
    <property type="evidence" value="ECO:0007669"/>
    <property type="project" value="UniProtKB-SubCell"/>
</dbReference>
<dbReference type="GO" id="GO:0046872">
    <property type="term" value="F:metal ion binding"/>
    <property type="evidence" value="ECO:0007669"/>
    <property type="project" value="UniProtKB-KW"/>
</dbReference>
<dbReference type="GO" id="GO:0017183">
    <property type="term" value="P:protein histidyl modification to diphthamide"/>
    <property type="evidence" value="ECO:0007669"/>
    <property type="project" value="UniProtKB-UniPathway"/>
</dbReference>
<dbReference type="CDD" id="cd06257">
    <property type="entry name" value="DnaJ"/>
    <property type="match status" value="1"/>
</dbReference>
<dbReference type="FunFam" id="1.10.287.110:FF:000203">
    <property type="entry name" value="Diphthamide biosynthesis protein 4"/>
    <property type="match status" value="1"/>
</dbReference>
<dbReference type="FunFam" id="3.10.660.10:FF:000006">
    <property type="entry name" value="Diphthamide biosynthesis protein 4"/>
    <property type="match status" value="1"/>
</dbReference>
<dbReference type="Gene3D" id="1.10.287.110">
    <property type="entry name" value="DnaJ domain"/>
    <property type="match status" value="1"/>
</dbReference>
<dbReference type="Gene3D" id="3.10.660.10">
    <property type="entry name" value="DPH Zinc finger"/>
    <property type="match status" value="1"/>
</dbReference>
<dbReference type="InterPro" id="IPR001623">
    <property type="entry name" value="DnaJ_domain"/>
</dbReference>
<dbReference type="InterPro" id="IPR044248">
    <property type="entry name" value="DPH3/4-like"/>
</dbReference>
<dbReference type="InterPro" id="IPR007872">
    <property type="entry name" value="DPH_MB_dom"/>
</dbReference>
<dbReference type="InterPro" id="IPR036671">
    <property type="entry name" value="DPH_MB_sf"/>
</dbReference>
<dbReference type="InterPro" id="IPR036869">
    <property type="entry name" value="J_dom_sf"/>
</dbReference>
<dbReference type="PANTHER" id="PTHR21454:SF46">
    <property type="entry name" value="DIPHTHAMIDE BIOSYNTHESIS PROTEIN 4"/>
    <property type="match status" value="1"/>
</dbReference>
<dbReference type="PANTHER" id="PTHR21454">
    <property type="entry name" value="DPH3 HOMOLOG-RELATED"/>
    <property type="match status" value="1"/>
</dbReference>
<dbReference type="Pfam" id="PF05207">
    <property type="entry name" value="Zn_ribbon_CSL"/>
    <property type="match status" value="1"/>
</dbReference>
<dbReference type="SMART" id="SM00271">
    <property type="entry name" value="DnaJ"/>
    <property type="match status" value="1"/>
</dbReference>
<dbReference type="SUPFAM" id="SSF46565">
    <property type="entry name" value="Chaperone J-domain"/>
    <property type="match status" value="1"/>
</dbReference>
<dbReference type="SUPFAM" id="SSF144217">
    <property type="entry name" value="CSL zinc finger"/>
    <property type="match status" value="1"/>
</dbReference>
<dbReference type="PROSITE" id="PS50076">
    <property type="entry name" value="DNAJ_2"/>
    <property type="match status" value="1"/>
</dbReference>
<dbReference type="PROSITE" id="PS51074">
    <property type="entry name" value="DPH_MB"/>
    <property type="match status" value="1"/>
</dbReference>
<accession>Q4WPF7</accession>